<protein>
    <recommendedName>
        <fullName>Cytolethal distending toxin subunit A</fullName>
        <shortName>CDT A</shortName>
    </recommendedName>
</protein>
<reference key="1">
    <citation type="journal article" date="1998" name="Infect. Immun.">
        <title>The cell cycle-specific growth-inhibitory factor produced by Actinobacillus actinomycetemcomitans is a cytolethal distending toxin.</title>
        <authorList>
            <person name="Sugai M."/>
            <person name="Kawamoto T."/>
            <person name="Peres S.Y."/>
            <person name="Ueno Y."/>
            <person name="Komatsuzawa H."/>
            <person name="Fujiwara T."/>
            <person name="Kurihara H."/>
            <person name="Suginaka H."/>
            <person name="Oswald E."/>
        </authorList>
    </citation>
    <scope>NUCLEOTIDE SEQUENCE [GENOMIC DNA]</scope>
    <source>
        <strain>ATCC 43718 / FDC Y4 / Serotype b</strain>
    </source>
</reference>
<reference key="2">
    <citation type="journal article" date="1999" name="Infect. Immun.">
        <title>Identification of a cytolethal distending toxin gene locus and features of a virulence-associated region in Actinobacillus actinomycetemcomitans.</title>
        <authorList>
            <person name="Mayer M.P."/>
            <person name="Bueno L.C."/>
            <person name="Hansen E.J."/>
            <person name="DiRienzo J.M."/>
        </authorList>
    </citation>
    <scope>NUCLEOTIDE SEQUENCE [GENOMIC DNA]</scope>
    <source>
        <strain>ATCC 43718 / FDC Y4 / Serotype b</strain>
    </source>
</reference>
<reference key="3">
    <citation type="journal article" date="2000" name="J. Immunol.">
        <title>Expression of the cytolethal distending toxin (Cdt) operon in Actinobacillus actinomycetemcomitans: evidence that the CdtB protein is responsible for G2 arrest of the cell cycle in human T cells.</title>
        <authorList>
            <person name="Shenker B.J."/>
            <person name="Hoffmaster R.H."/>
            <person name="McKay T.L."/>
            <person name="Demuth D.R."/>
        </authorList>
    </citation>
    <scope>NUCLEOTIDE SEQUENCE [GENOMIC DNA]</scope>
    <source>
        <strain>652</strain>
    </source>
</reference>
<reference key="4">
    <citation type="journal article" date="2001" name="Microbiol. Immunol.">
        <title>Reconstitution and purification of cytolethal distending toxin of Actinobacillus actinomycetemcomitans.</title>
        <authorList>
            <person name="Saiki K."/>
            <person name="Konishi K."/>
            <person name="Gomi T."/>
            <person name="Nishihara T."/>
            <person name="Yoshikawa M."/>
        </authorList>
    </citation>
    <scope>NUCLEOTIDE SEQUENCE [GENOMIC DNA]</scope>
    <scope>PROTEIN SEQUENCE OF 48-57</scope>
    <scope>SUBUNIT</scope>
    <source>
        <strain>ATCC 29522 / NCTC 10979 / Serotype b</strain>
    </source>
</reference>
<reference key="5">
    <citation type="journal article" date="2006" name="Protein Sci.">
        <title>Variation of loop sequence alters stability of cytolethal distending toxin (CDT): crystal structure of CDT from Actinobacillus actinomycetemcomitans.</title>
        <authorList>
            <person name="Yamada T."/>
            <person name="Komoto J."/>
            <person name="Saiki K."/>
            <person name="Konishi K."/>
            <person name="Takusagawa F."/>
        </authorList>
    </citation>
    <scope>X-RAY CRYSTALLOGRAPHY (2.4 ANGSTROMS)</scope>
    <scope>FUNCTION</scope>
    <scope>SUBUNIT</scope>
</reference>
<feature type="signal peptide" evidence="3">
    <location>
        <begin position="1"/>
        <end position="15"/>
    </location>
</feature>
<feature type="chain" id="PRO_0000013368" description="Cytolethal distending toxin subunit A">
    <location>
        <begin position="16"/>
        <end position="222"/>
    </location>
</feature>
<feature type="domain" description="Ricin B-type lectin" evidence="2">
    <location>
        <begin position="122"/>
        <end position="211"/>
    </location>
</feature>
<feature type="region of interest" description="Disordered" evidence="4">
    <location>
        <begin position="22"/>
        <end position="44"/>
    </location>
</feature>
<feature type="region of interest" description="Mediates binding to target cells" evidence="1">
    <location>
        <begin position="90"/>
        <end position="101"/>
    </location>
</feature>
<feature type="lipid moiety-binding region" description="N-palmitoyl cysteine" evidence="7">
    <location>
        <position position="16"/>
    </location>
</feature>
<feature type="lipid moiety-binding region" description="S-diacylglycerol cysteine" evidence="7">
    <location>
        <position position="16"/>
    </location>
</feature>
<feature type="helix" evidence="8">
    <location>
        <begin position="73"/>
        <end position="75"/>
    </location>
</feature>
<feature type="strand" evidence="8">
    <location>
        <begin position="77"/>
        <end position="81"/>
    </location>
</feature>
<feature type="strand" evidence="8">
    <location>
        <begin position="84"/>
        <end position="89"/>
    </location>
</feature>
<feature type="strand" evidence="8">
    <location>
        <begin position="97"/>
        <end position="102"/>
    </location>
</feature>
<feature type="helix" evidence="8">
    <location>
        <begin position="103"/>
        <end position="105"/>
    </location>
</feature>
<feature type="helix" evidence="8">
    <location>
        <begin position="107"/>
        <end position="113"/>
    </location>
</feature>
<feature type="strand" evidence="8">
    <location>
        <begin position="115"/>
        <end position="119"/>
    </location>
</feature>
<feature type="strand" evidence="8">
    <location>
        <begin position="126"/>
        <end position="130"/>
    </location>
</feature>
<feature type="turn" evidence="8">
    <location>
        <begin position="131"/>
        <end position="133"/>
    </location>
</feature>
<feature type="strand" evidence="8">
    <location>
        <begin position="136"/>
        <end position="140"/>
    </location>
</feature>
<feature type="strand" evidence="8">
    <location>
        <begin position="143"/>
        <end position="147"/>
    </location>
</feature>
<feature type="helix" evidence="8">
    <location>
        <begin position="154"/>
        <end position="156"/>
    </location>
</feature>
<feature type="strand" evidence="8">
    <location>
        <begin position="158"/>
        <end position="163"/>
    </location>
</feature>
<feature type="strand" evidence="8">
    <location>
        <begin position="168"/>
        <end position="172"/>
    </location>
</feature>
<feature type="turn" evidence="8">
    <location>
        <begin position="173"/>
        <end position="175"/>
    </location>
</feature>
<feature type="strand" evidence="8">
    <location>
        <begin position="178"/>
        <end position="181"/>
    </location>
</feature>
<feature type="strand" evidence="8">
    <location>
        <begin position="186"/>
        <end position="195"/>
    </location>
</feature>
<feature type="strand" evidence="8">
    <location>
        <begin position="208"/>
        <end position="212"/>
    </location>
</feature>
<feature type="strand" evidence="8">
    <location>
        <begin position="218"/>
        <end position="220"/>
    </location>
</feature>
<accession>O87120</accession>
<comment type="function">
    <text evidence="6">CDTs are cytotoxins which induce host cell distension, growth arrest in G2/M phase, nucleus swelling, and chromatin fragmentation in HeLa cells.</text>
</comment>
<comment type="subunit">
    <text evidence="5 6">Heterotrimer of 3 subunits, CdtA, CdtB and CdtC. May form higher oligomers.</text>
</comment>
<comment type="subcellular location">
    <subcellularLocation>
        <location evidence="7">Cell outer membrane</location>
        <topology evidence="7">Lipid-anchor</topology>
    </subcellularLocation>
</comment>
<proteinExistence type="evidence at protein level"/>
<name>CDTA_AGGAC</name>
<evidence type="ECO:0000250" key="1"/>
<evidence type="ECO:0000255" key="2">
    <source>
        <dbReference type="PROSITE-ProRule" id="PRU00174"/>
    </source>
</evidence>
<evidence type="ECO:0000255" key="3">
    <source>
        <dbReference type="PROSITE-ProRule" id="PRU00303"/>
    </source>
</evidence>
<evidence type="ECO:0000256" key="4">
    <source>
        <dbReference type="SAM" id="MobiDB-lite"/>
    </source>
</evidence>
<evidence type="ECO:0000269" key="5">
    <source>
    </source>
</evidence>
<evidence type="ECO:0000269" key="6">
    <source>
    </source>
</evidence>
<evidence type="ECO:0000305" key="7"/>
<evidence type="ECO:0007829" key="8">
    <source>
        <dbReference type="PDB" id="2F2F"/>
    </source>
</evidence>
<organism>
    <name type="scientific">Aggregatibacter actinomycetemcomitans</name>
    <name type="common">Actinobacillus actinomycetemcomitans</name>
    <name type="synonym">Haemophilus actinomycetemcomitans</name>
    <dbReference type="NCBI Taxonomy" id="714"/>
    <lineage>
        <taxon>Bacteria</taxon>
        <taxon>Pseudomonadati</taxon>
        <taxon>Pseudomonadota</taxon>
        <taxon>Gammaproteobacteria</taxon>
        <taxon>Pasteurellales</taxon>
        <taxon>Pasteurellaceae</taxon>
        <taxon>Aggregatibacter</taxon>
    </lineage>
</organism>
<sequence>MKKFLPGLLLMGLVACSSNQRMSDYSQPESQSDLAPKSSTTQFQPQPLLSKASSMPLNLLSSSKNGQVSPSEPSNFMTLMGQNGALLTVWALAKRNWLWAYPNIYSQDFGNIRNWKIEPGKHREYFRFVNQSLGTCIEAYGNGLIHDTCSLDKLAQEFELLPTDSGAVVIKSVSQGRCVTYNPVSPTYYSTVTLSTCDGATEPLRDQTWYLAPPVLEATAVN</sequence>
<keyword id="KW-0002">3D-structure</keyword>
<keyword id="KW-0998">Cell outer membrane</keyword>
<keyword id="KW-0903">Direct protein sequencing</keyword>
<keyword id="KW-0430">Lectin</keyword>
<keyword id="KW-0449">Lipoprotein</keyword>
<keyword id="KW-0472">Membrane</keyword>
<keyword id="KW-0564">Palmitate</keyword>
<keyword id="KW-0732">Signal</keyword>
<keyword id="KW-0800">Toxin</keyword>
<keyword id="KW-0843">Virulence</keyword>
<gene>
    <name type="primary">cdtA</name>
</gene>
<dbReference type="EMBL" id="AB011405">
    <property type="protein sequence ID" value="BAA33485.1"/>
    <property type="molecule type" value="Genomic_DNA"/>
</dbReference>
<dbReference type="EMBL" id="AF006830">
    <property type="protein sequence ID" value="AAC70897.1"/>
    <property type="molecule type" value="Genomic_DNA"/>
</dbReference>
<dbReference type="EMBL" id="AF102554">
    <property type="protein sequence ID" value="AAG09113.1"/>
    <property type="molecule type" value="Genomic_DNA"/>
</dbReference>
<dbReference type="EMBL" id="AB017807">
    <property type="protein sequence ID" value="BAA35116.1"/>
    <property type="molecule type" value="Genomic_DNA"/>
</dbReference>
<dbReference type="RefSeq" id="WP_005540930.1">
    <property type="nucleotide sequence ID" value="NZ_VSEW01000012.1"/>
</dbReference>
<dbReference type="PDB" id="2F2F">
    <property type="method" value="X-ray"/>
    <property type="resolution" value="2.40 A"/>
    <property type="chains" value="A/D=1-222"/>
</dbReference>
<dbReference type="PDBsum" id="2F2F"/>
<dbReference type="SMR" id="O87120"/>
<dbReference type="STRING" id="714.ACT75_10585"/>
<dbReference type="GeneID" id="77211488"/>
<dbReference type="eggNOG" id="ENOG50347HZ">
    <property type="taxonomic scope" value="Bacteria"/>
</dbReference>
<dbReference type="OMA" id="REYFRFV"/>
<dbReference type="OrthoDB" id="5672787at2"/>
<dbReference type="EvolutionaryTrace" id="O87120"/>
<dbReference type="GO" id="GO:0009279">
    <property type="term" value="C:cell outer membrane"/>
    <property type="evidence" value="ECO:0007669"/>
    <property type="project" value="UniProtKB-SubCell"/>
</dbReference>
<dbReference type="GO" id="GO:0030246">
    <property type="term" value="F:carbohydrate binding"/>
    <property type="evidence" value="ECO:0007669"/>
    <property type="project" value="UniProtKB-KW"/>
</dbReference>
<dbReference type="GO" id="GO:0090729">
    <property type="term" value="F:toxin activity"/>
    <property type="evidence" value="ECO:0007669"/>
    <property type="project" value="UniProtKB-KW"/>
</dbReference>
<dbReference type="CDD" id="cd23414">
    <property type="entry name" value="beta-trefoil_Ricin_CdtA"/>
    <property type="match status" value="1"/>
</dbReference>
<dbReference type="DisProt" id="DP01002"/>
<dbReference type="Gene3D" id="2.80.10.50">
    <property type="match status" value="1"/>
</dbReference>
<dbReference type="InterPro" id="IPR015957">
    <property type="entry name" value="CDtoxinA"/>
</dbReference>
<dbReference type="InterPro" id="IPR003558">
    <property type="entry name" value="CDtoxinA/C"/>
</dbReference>
<dbReference type="InterPro" id="IPR035992">
    <property type="entry name" value="Ricin_B-like_lectins"/>
</dbReference>
<dbReference type="Pfam" id="PF03498">
    <property type="entry name" value="CDtoxinA"/>
    <property type="match status" value="1"/>
</dbReference>
<dbReference type="PIRSF" id="PIRSF036516">
    <property type="entry name" value="CDT_A"/>
    <property type="match status" value="1"/>
</dbReference>
<dbReference type="PRINTS" id="PR01387">
    <property type="entry name" value="CDTOXINA"/>
</dbReference>
<dbReference type="SUPFAM" id="SSF50370">
    <property type="entry name" value="Ricin B-like lectins"/>
    <property type="match status" value="1"/>
</dbReference>
<dbReference type="PROSITE" id="PS51257">
    <property type="entry name" value="PROKAR_LIPOPROTEIN"/>
    <property type="match status" value="1"/>
</dbReference>
<dbReference type="PROSITE" id="PS50231">
    <property type="entry name" value="RICIN_B_LECTIN"/>
    <property type="match status" value="1"/>
</dbReference>